<accession>P48159</accession>
<accession>B7FNL0</accession>
<accession>Q9W1Y7</accession>
<feature type="chain" id="PRO_0000128623" description="Large ribosomal subunit protein uL14">
    <location>
        <begin position="1"/>
        <end position="140"/>
    </location>
</feature>
<feature type="sequence conflict" description="In Ref. 1; AAA28867." evidence="1" ref="1">
    <original>MPAVVI</original>
    <variation>SVVPSA</variation>
    <location>
        <begin position="77"/>
        <end position="82"/>
    </location>
</feature>
<name>RL23_DROME</name>
<protein>
    <recommendedName>
        <fullName evidence="1">Large ribosomal subunit protein uL14</fullName>
    </recommendedName>
    <alternativeName>
        <fullName>60S ribosomal protein L23</fullName>
    </alternativeName>
    <alternativeName>
        <fullName>L17A</fullName>
    </alternativeName>
</protein>
<comment type="similarity">
    <text evidence="1">Belongs to the universal ribosomal protein uL14 family.</text>
</comment>
<evidence type="ECO:0000305" key="1"/>
<gene>
    <name type="primary">RpL23</name>
    <name type="synonym">RpL17A</name>
    <name type="ORF">CG3661</name>
</gene>
<sequence length="140" mass="14937">MSKRGRGGTAGGKFRISLGLPVGAVMNCADNTGAKNLYVIAVHGIRGRLNRLPAAGVGDMFVATVKKGKPELRKKVMPAVVIRQRKPFRRRDGVFIYFEDNAGVIVNNKGEMKGSAITGPVAKECADLWPRIASNASSIA</sequence>
<reference key="1">
    <citation type="journal article" date="1992" name="Gene">
        <title>The Drosophila melanogaster ribosomal protein L17A-encoding gene.</title>
        <authorList>
            <person name="Noselli S."/>
            <person name="Vincent A."/>
        </authorList>
    </citation>
    <scope>NUCLEOTIDE SEQUENCE [GENOMIC DNA]</scope>
</reference>
<reference key="2">
    <citation type="journal article" date="2000" name="Science">
        <title>The genome sequence of Drosophila melanogaster.</title>
        <authorList>
            <person name="Adams M.D."/>
            <person name="Celniker S.E."/>
            <person name="Holt R.A."/>
            <person name="Evans C.A."/>
            <person name="Gocayne J.D."/>
            <person name="Amanatides P.G."/>
            <person name="Scherer S.E."/>
            <person name="Li P.W."/>
            <person name="Hoskins R.A."/>
            <person name="Galle R.F."/>
            <person name="George R.A."/>
            <person name="Lewis S.E."/>
            <person name="Richards S."/>
            <person name="Ashburner M."/>
            <person name="Henderson S.N."/>
            <person name="Sutton G.G."/>
            <person name="Wortman J.R."/>
            <person name="Yandell M.D."/>
            <person name="Zhang Q."/>
            <person name="Chen L.X."/>
            <person name="Brandon R.C."/>
            <person name="Rogers Y.-H.C."/>
            <person name="Blazej R.G."/>
            <person name="Champe M."/>
            <person name="Pfeiffer B.D."/>
            <person name="Wan K.H."/>
            <person name="Doyle C."/>
            <person name="Baxter E.G."/>
            <person name="Helt G."/>
            <person name="Nelson C.R."/>
            <person name="Miklos G.L.G."/>
            <person name="Abril J.F."/>
            <person name="Agbayani A."/>
            <person name="An H.-J."/>
            <person name="Andrews-Pfannkoch C."/>
            <person name="Baldwin D."/>
            <person name="Ballew R.M."/>
            <person name="Basu A."/>
            <person name="Baxendale J."/>
            <person name="Bayraktaroglu L."/>
            <person name="Beasley E.M."/>
            <person name="Beeson K.Y."/>
            <person name="Benos P.V."/>
            <person name="Berman B.P."/>
            <person name="Bhandari D."/>
            <person name="Bolshakov S."/>
            <person name="Borkova D."/>
            <person name="Botchan M.R."/>
            <person name="Bouck J."/>
            <person name="Brokstein P."/>
            <person name="Brottier P."/>
            <person name="Burtis K.C."/>
            <person name="Busam D.A."/>
            <person name="Butler H."/>
            <person name="Cadieu E."/>
            <person name="Center A."/>
            <person name="Chandra I."/>
            <person name="Cherry J.M."/>
            <person name="Cawley S."/>
            <person name="Dahlke C."/>
            <person name="Davenport L.B."/>
            <person name="Davies P."/>
            <person name="de Pablos B."/>
            <person name="Delcher A."/>
            <person name="Deng Z."/>
            <person name="Mays A.D."/>
            <person name="Dew I."/>
            <person name="Dietz S.M."/>
            <person name="Dodson K."/>
            <person name="Doup L.E."/>
            <person name="Downes M."/>
            <person name="Dugan-Rocha S."/>
            <person name="Dunkov B.C."/>
            <person name="Dunn P."/>
            <person name="Durbin K.J."/>
            <person name="Evangelista C.C."/>
            <person name="Ferraz C."/>
            <person name="Ferriera S."/>
            <person name="Fleischmann W."/>
            <person name="Fosler C."/>
            <person name="Gabrielian A.E."/>
            <person name="Garg N.S."/>
            <person name="Gelbart W.M."/>
            <person name="Glasser K."/>
            <person name="Glodek A."/>
            <person name="Gong F."/>
            <person name="Gorrell J.H."/>
            <person name="Gu Z."/>
            <person name="Guan P."/>
            <person name="Harris M."/>
            <person name="Harris N.L."/>
            <person name="Harvey D.A."/>
            <person name="Heiman T.J."/>
            <person name="Hernandez J.R."/>
            <person name="Houck J."/>
            <person name="Hostin D."/>
            <person name="Houston K.A."/>
            <person name="Howland T.J."/>
            <person name="Wei M.-H."/>
            <person name="Ibegwam C."/>
            <person name="Jalali M."/>
            <person name="Kalush F."/>
            <person name="Karpen G.H."/>
            <person name="Ke Z."/>
            <person name="Kennison J.A."/>
            <person name="Ketchum K.A."/>
            <person name="Kimmel B.E."/>
            <person name="Kodira C.D."/>
            <person name="Kraft C.L."/>
            <person name="Kravitz S."/>
            <person name="Kulp D."/>
            <person name="Lai Z."/>
            <person name="Lasko P."/>
            <person name="Lei Y."/>
            <person name="Levitsky A.A."/>
            <person name="Li J.H."/>
            <person name="Li Z."/>
            <person name="Liang Y."/>
            <person name="Lin X."/>
            <person name="Liu X."/>
            <person name="Mattei B."/>
            <person name="McIntosh T.C."/>
            <person name="McLeod M.P."/>
            <person name="McPherson D."/>
            <person name="Merkulov G."/>
            <person name="Milshina N.V."/>
            <person name="Mobarry C."/>
            <person name="Morris J."/>
            <person name="Moshrefi A."/>
            <person name="Mount S.M."/>
            <person name="Moy M."/>
            <person name="Murphy B."/>
            <person name="Murphy L."/>
            <person name="Muzny D.M."/>
            <person name="Nelson D.L."/>
            <person name="Nelson D.R."/>
            <person name="Nelson K.A."/>
            <person name="Nixon K."/>
            <person name="Nusskern D.R."/>
            <person name="Pacleb J.M."/>
            <person name="Palazzolo M."/>
            <person name="Pittman G.S."/>
            <person name="Pan S."/>
            <person name="Pollard J."/>
            <person name="Puri V."/>
            <person name="Reese M.G."/>
            <person name="Reinert K."/>
            <person name="Remington K."/>
            <person name="Saunders R.D.C."/>
            <person name="Scheeler F."/>
            <person name="Shen H."/>
            <person name="Shue B.C."/>
            <person name="Siden-Kiamos I."/>
            <person name="Simpson M."/>
            <person name="Skupski M.P."/>
            <person name="Smith T.J."/>
            <person name="Spier E."/>
            <person name="Spradling A.C."/>
            <person name="Stapleton M."/>
            <person name="Strong R."/>
            <person name="Sun E."/>
            <person name="Svirskas R."/>
            <person name="Tector C."/>
            <person name="Turner R."/>
            <person name="Venter E."/>
            <person name="Wang A.H."/>
            <person name="Wang X."/>
            <person name="Wang Z.-Y."/>
            <person name="Wassarman D.A."/>
            <person name="Weinstock G.M."/>
            <person name="Weissenbach J."/>
            <person name="Williams S.M."/>
            <person name="Woodage T."/>
            <person name="Worley K.C."/>
            <person name="Wu D."/>
            <person name="Yang S."/>
            <person name="Yao Q.A."/>
            <person name="Ye J."/>
            <person name="Yeh R.-F."/>
            <person name="Zaveri J.S."/>
            <person name="Zhan M."/>
            <person name="Zhang G."/>
            <person name="Zhao Q."/>
            <person name="Zheng L."/>
            <person name="Zheng X.H."/>
            <person name="Zhong F.N."/>
            <person name="Zhong W."/>
            <person name="Zhou X."/>
            <person name="Zhu S.C."/>
            <person name="Zhu X."/>
            <person name="Smith H.O."/>
            <person name="Gibbs R.A."/>
            <person name="Myers E.W."/>
            <person name="Rubin G.M."/>
            <person name="Venter J.C."/>
        </authorList>
    </citation>
    <scope>NUCLEOTIDE SEQUENCE [LARGE SCALE GENOMIC DNA]</scope>
    <source>
        <strain>Berkeley</strain>
    </source>
</reference>
<reference key="3">
    <citation type="journal article" date="2002" name="Genome Biol.">
        <title>Annotation of the Drosophila melanogaster euchromatic genome: a systematic review.</title>
        <authorList>
            <person name="Misra S."/>
            <person name="Crosby M.A."/>
            <person name="Mungall C.J."/>
            <person name="Matthews B.B."/>
            <person name="Campbell K.S."/>
            <person name="Hradecky P."/>
            <person name="Huang Y."/>
            <person name="Kaminker J.S."/>
            <person name="Millburn G.H."/>
            <person name="Prochnik S.E."/>
            <person name="Smith C.D."/>
            <person name="Tupy J.L."/>
            <person name="Whitfield E.J."/>
            <person name="Bayraktaroglu L."/>
            <person name="Berman B.P."/>
            <person name="Bettencourt B.R."/>
            <person name="Celniker S.E."/>
            <person name="de Grey A.D.N.J."/>
            <person name="Drysdale R.A."/>
            <person name="Harris N.L."/>
            <person name="Richter J."/>
            <person name="Russo S."/>
            <person name="Schroeder A.J."/>
            <person name="Shu S.Q."/>
            <person name="Stapleton M."/>
            <person name="Yamada C."/>
            <person name="Ashburner M."/>
            <person name="Gelbart W.M."/>
            <person name="Rubin G.M."/>
            <person name="Lewis S.E."/>
        </authorList>
    </citation>
    <scope>GENOME REANNOTATION</scope>
    <source>
        <strain>Berkeley</strain>
    </source>
</reference>
<reference key="4">
    <citation type="submission" date="2008-12" db="EMBL/GenBank/DDBJ databases">
        <authorList>
            <person name="Carlson J.W."/>
            <person name="Booth B."/>
            <person name="Frise E."/>
            <person name="Park S."/>
            <person name="Wan K.H."/>
            <person name="Yu C."/>
            <person name="Celniker S.E."/>
        </authorList>
    </citation>
    <scope>NUCLEOTIDE SEQUENCE [LARGE SCALE MRNA]</scope>
    <source>
        <strain>Berkeley</strain>
        <tissue>Ovary</tissue>
    </source>
</reference>
<reference key="5">
    <citation type="journal article" date="2013" name="Nature">
        <title>Structures of the human and Drosophila 80S ribosome.</title>
        <authorList>
            <person name="Anger A.M."/>
            <person name="Armache J.P."/>
            <person name="Berninghausen O."/>
            <person name="Habeck M."/>
            <person name="Subklewe M."/>
            <person name="Wilson D.N."/>
            <person name="Beckmann R."/>
        </authorList>
    </citation>
    <scope>STRUCTURE BY ELECTRON MICROSCOPY (6.0 ANGSTROMS) OF THE 80S RIBOSOME</scope>
</reference>
<organism>
    <name type="scientific">Drosophila melanogaster</name>
    <name type="common">Fruit fly</name>
    <dbReference type="NCBI Taxonomy" id="7227"/>
    <lineage>
        <taxon>Eukaryota</taxon>
        <taxon>Metazoa</taxon>
        <taxon>Ecdysozoa</taxon>
        <taxon>Arthropoda</taxon>
        <taxon>Hexapoda</taxon>
        <taxon>Insecta</taxon>
        <taxon>Pterygota</taxon>
        <taxon>Neoptera</taxon>
        <taxon>Endopterygota</taxon>
        <taxon>Diptera</taxon>
        <taxon>Brachycera</taxon>
        <taxon>Muscomorpha</taxon>
        <taxon>Ephydroidea</taxon>
        <taxon>Drosophilidae</taxon>
        <taxon>Drosophila</taxon>
        <taxon>Sophophora</taxon>
    </lineage>
</organism>
<keyword id="KW-0002">3D-structure</keyword>
<keyword id="KW-1185">Reference proteome</keyword>
<keyword id="KW-0687">Ribonucleoprotein</keyword>
<keyword id="KW-0689">Ribosomal protein</keyword>
<proteinExistence type="evidence at protein level"/>
<dbReference type="EMBL" id="M85295">
    <property type="protein sequence ID" value="AAA28867.1"/>
    <property type="molecule type" value="Genomic_DNA"/>
</dbReference>
<dbReference type="EMBL" id="AE013599">
    <property type="protein sequence ID" value="AAF46914.1"/>
    <property type="molecule type" value="Genomic_DNA"/>
</dbReference>
<dbReference type="EMBL" id="BT053700">
    <property type="protein sequence ID" value="ACK77617.1"/>
    <property type="molecule type" value="mRNA"/>
</dbReference>
<dbReference type="PIR" id="JC1253">
    <property type="entry name" value="JC1253"/>
</dbReference>
<dbReference type="RefSeq" id="NP_523813.1">
    <property type="nucleotide sequence ID" value="NM_079089.4"/>
</dbReference>
<dbReference type="PDB" id="4V6W">
    <property type="method" value="EM"/>
    <property type="resolution" value="6.00 A"/>
    <property type="chains" value="CV=1-140"/>
</dbReference>
<dbReference type="PDB" id="6XU6">
    <property type="method" value="EM"/>
    <property type="resolution" value="3.50 A"/>
    <property type="chains" value="CV=7-140"/>
</dbReference>
<dbReference type="PDB" id="6XU7">
    <property type="method" value="EM"/>
    <property type="resolution" value="4.90 A"/>
    <property type="chains" value="CV=7-140"/>
</dbReference>
<dbReference type="PDB" id="6XU8">
    <property type="method" value="EM"/>
    <property type="resolution" value="3.00 A"/>
    <property type="chains" value="CV=7-140"/>
</dbReference>
<dbReference type="PDBsum" id="4V6W"/>
<dbReference type="PDBsum" id="6XU6"/>
<dbReference type="PDBsum" id="6XU7"/>
<dbReference type="PDBsum" id="6XU8"/>
<dbReference type="EMDB" id="EMD-10622"/>
<dbReference type="EMDB" id="EMD-10623"/>
<dbReference type="EMDB" id="EMD-10624"/>
<dbReference type="SMR" id="P48159"/>
<dbReference type="BioGRID" id="63240">
    <property type="interactions" value="118"/>
</dbReference>
<dbReference type="DIP" id="DIP-21429N"/>
<dbReference type="FunCoup" id="P48159">
    <property type="interactions" value="1545"/>
</dbReference>
<dbReference type="IntAct" id="P48159">
    <property type="interactions" value="21"/>
</dbReference>
<dbReference type="MINT" id="P48159"/>
<dbReference type="STRING" id="7227.FBpp0071808"/>
<dbReference type="PaxDb" id="7227-FBpp0071808"/>
<dbReference type="DNASU" id="37628"/>
<dbReference type="EnsemblMetazoa" id="FBtr0071897">
    <property type="protein sequence ID" value="FBpp0071808"/>
    <property type="gene ID" value="FBgn0010078"/>
</dbReference>
<dbReference type="GeneID" id="37628"/>
<dbReference type="KEGG" id="dme:Dmel_CG3661"/>
<dbReference type="AGR" id="FB:FBgn0010078"/>
<dbReference type="CTD" id="9349"/>
<dbReference type="FlyBase" id="FBgn0010078">
    <property type="gene designation" value="RpL23"/>
</dbReference>
<dbReference type="VEuPathDB" id="VectorBase:FBgn0010078"/>
<dbReference type="eggNOG" id="KOG0901">
    <property type="taxonomic scope" value="Eukaryota"/>
</dbReference>
<dbReference type="GeneTree" id="ENSGT00390000004690"/>
<dbReference type="HOGENOM" id="CLU_095071_3_0_1"/>
<dbReference type="InParanoid" id="P48159"/>
<dbReference type="OMA" id="MIQMQTR"/>
<dbReference type="OrthoDB" id="407959at2759"/>
<dbReference type="PhylomeDB" id="P48159"/>
<dbReference type="Reactome" id="R-DME-156827">
    <property type="pathway name" value="L13a-mediated translational silencing of Ceruloplasmin expression"/>
</dbReference>
<dbReference type="Reactome" id="R-DME-1799339">
    <property type="pathway name" value="SRP-dependent cotranslational protein targeting to membrane"/>
</dbReference>
<dbReference type="Reactome" id="R-DME-72689">
    <property type="pathway name" value="Formation of a pool of free 40S subunits"/>
</dbReference>
<dbReference type="Reactome" id="R-DME-72706">
    <property type="pathway name" value="GTP hydrolysis and joining of the 60S ribosomal subunit"/>
</dbReference>
<dbReference type="Reactome" id="R-DME-975956">
    <property type="pathway name" value="Nonsense Mediated Decay (NMD) independent of the Exon Junction Complex (EJC)"/>
</dbReference>
<dbReference type="Reactome" id="R-DME-975957">
    <property type="pathway name" value="Nonsense Mediated Decay (NMD) enhanced by the Exon Junction Complex (EJC)"/>
</dbReference>
<dbReference type="SignaLink" id="P48159"/>
<dbReference type="BioGRID-ORCS" id="37628">
    <property type="hits" value="1 hit in 1 CRISPR screen"/>
</dbReference>
<dbReference type="ChiTaRS" id="RpL23">
    <property type="organism name" value="fly"/>
</dbReference>
<dbReference type="GenomeRNAi" id="37628"/>
<dbReference type="PRO" id="PR:P48159"/>
<dbReference type="Proteomes" id="UP000000803">
    <property type="component" value="Chromosome 2R"/>
</dbReference>
<dbReference type="Bgee" id="FBgn0010078">
    <property type="expression patterns" value="Expressed in eye disc (Drosophila) and 286 other cell types or tissues"/>
</dbReference>
<dbReference type="ExpressionAtlas" id="P48159">
    <property type="expression patterns" value="baseline and differential"/>
</dbReference>
<dbReference type="GO" id="GO:0022625">
    <property type="term" value="C:cytosolic large ribosomal subunit"/>
    <property type="evidence" value="ECO:0000318"/>
    <property type="project" value="GO_Central"/>
</dbReference>
<dbReference type="GO" id="GO:0022626">
    <property type="term" value="C:cytosolic ribosome"/>
    <property type="evidence" value="ECO:0000314"/>
    <property type="project" value="FlyBase"/>
</dbReference>
<dbReference type="GO" id="GO:0070180">
    <property type="term" value="F:large ribosomal subunit rRNA binding"/>
    <property type="evidence" value="ECO:0000318"/>
    <property type="project" value="GO_Central"/>
</dbReference>
<dbReference type="GO" id="GO:0017022">
    <property type="term" value="F:myosin binding"/>
    <property type="evidence" value="ECO:0000353"/>
    <property type="project" value="FlyBase"/>
</dbReference>
<dbReference type="GO" id="GO:0003735">
    <property type="term" value="F:structural constituent of ribosome"/>
    <property type="evidence" value="ECO:0000314"/>
    <property type="project" value="FlyBase"/>
</dbReference>
<dbReference type="GO" id="GO:0002181">
    <property type="term" value="P:cytoplasmic translation"/>
    <property type="evidence" value="ECO:0000304"/>
    <property type="project" value="FlyBase"/>
</dbReference>
<dbReference type="CDD" id="cd00337">
    <property type="entry name" value="Ribosomal_uL14"/>
    <property type="match status" value="1"/>
</dbReference>
<dbReference type="FunFam" id="2.40.150.20:FF:000003">
    <property type="entry name" value="60S ribosomal protein L23"/>
    <property type="match status" value="1"/>
</dbReference>
<dbReference type="Gene3D" id="2.40.150.20">
    <property type="entry name" value="Ribosomal protein L14"/>
    <property type="match status" value="1"/>
</dbReference>
<dbReference type="HAMAP" id="MF_01367">
    <property type="entry name" value="Ribosomal_uL14"/>
    <property type="match status" value="1"/>
</dbReference>
<dbReference type="InterPro" id="IPR000218">
    <property type="entry name" value="Ribosomal_uL14"/>
</dbReference>
<dbReference type="InterPro" id="IPR019972">
    <property type="entry name" value="Ribosomal_uL14_CS"/>
</dbReference>
<dbReference type="InterPro" id="IPR036853">
    <property type="entry name" value="Ribosomal_uL14_sf"/>
</dbReference>
<dbReference type="NCBIfam" id="NF006344">
    <property type="entry name" value="PRK08571.1"/>
    <property type="match status" value="1"/>
</dbReference>
<dbReference type="PANTHER" id="PTHR11761">
    <property type="entry name" value="50S/60S RIBOSOMAL PROTEIN L14/L23"/>
    <property type="match status" value="1"/>
</dbReference>
<dbReference type="PANTHER" id="PTHR11761:SF8">
    <property type="entry name" value="LARGE RIBOSOMAL SUBUNIT PROTEIN UL14"/>
    <property type="match status" value="1"/>
</dbReference>
<dbReference type="Pfam" id="PF00238">
    <property type="entry name" value="Ribosomal_L14"/>
    <property type="match status" value="1"/>
</dbReference>
<dbReference type="SMART" id="SM01374">
    <property type="entry name" value="Ribosomal_L14"/>
    <property type="match status" value="1"/>
</dbReference>
<dbReference type="SUPFAM" id="SSF50193">
    <property type="entry name" value="Ribosomal protein L14"/>
    <property type="match status" value="1"/>
</dbReference>
<dbReference type="PROSITE" id="PS00049">
    <property type="entry name" value="RIBOSOMAL_L14"/>
    <property type="match status" value="1"/>
</dbReference>